<evidence type="ECO:0000255" key="1"/>
<evidence type="ECO:0000255" key="2">
    <source>
        <dbReference type="PROSITE-ProRule" id="PRU00159"/>
    </source>
</evidence>
<evidence type="ECO:0000255" key="3">
    <source>
        <dbReference type="PROSITE-ProRule" id="PRU00725"/>
    </source>
</evidence>
<evidence type="ECO:0000256" key="4">
    <source>
        <dbReference type="SAM" id="MobiDB-lite"/>
    </source>
</evidence>
<evidence type="ECO:0000305" key="5"/>
<dbReference type="EC" id="2.7.11.1"/>
<dbReference type="EMBL" id="AAFI02000125">
    <property type="protein sequence ID" value="EAL63023.1"/>
    <property type="molecule type" value="Genomic_DNA"/>
</dbReference>
<dbReference type="RefSeq" id="XP_636529.1">
    <property type="nucleotide sequence ID" value="XM_631437.1"/>
</dbReference>
<dbReference type="SMR" id="Q54IE8"/>
<dbReference type="STRING" id="44689.Q54IE8"/>
<dbReference type="GlyCosmos" id="Q54IE8">
    <property type="glycosylation" value="1 site, No reported glycans"/>
</dbReference>
<dbReference type="GlyGen" id="Q54IE8">
    <property type="glycosylation" value="1 site"/>
</dbReference>
<dbReference type="PaxDb" id="44689-DDB0229380"/>
<dbReference type="EnsemblProtists" id="EAL63023">
    <property type="protein sequence ID" value="EAL63023"/>
    <property type="gene ID" value="DDB_G0288803"/>
</dbReference>
<dbReference type="GeneID" id="8626814"/>
<dbReference type="KEGG" id="ddi:DDB_G0288803"/>
<dbReference type="dictyBase" id="DDB_G0288803">
    <property type="gene designation" value="irlE"/>
</dbReference>
<dbReference type="VEuPathDB" id="AmoebaDB:DDB_G0288803"/>
<dbReference type="eggNOG" id="KOG1027">
    <property type="taxonomic scope" value="Eukaryota"/>
</dbReference>
<dbReference type="HOGENOM" id="CLU_257765_0_0_1"/>
<dbReference type="InParanoid" id="Q54IE8"/>
<dbReference type="PRO" id="PR:Q54IE8"/>
<dbReference type="Proteomes" id="UP000002195">
    <property type="component" value="Chromosome 5"/>
</dbReference>
<dbReference type="GO" id="GO:1990604">
    <property type="term" value="C:IRE1-TRAF2-ASK1 complex"/>
    <property type="evidence" value="ECO:0000318"/>
    <property type="project" value="GO_Central"/>
</dbReference>
<dbReference type="GO" id="GO:0005524">
    <property type="term" value="F:ATP binding"/>
    <property type="evidence" value="ECO:0007669"/>
    <property type="project" value="UniProtKB-KW"/>
</dbReference>
<dbReference type="GO" id="GO:0106310">
    <property type="term" value="F:protein serine kinase activity"/>
    <property type="evidence" value="ECO:0007669"/>
    <property type="project" value="RHEA"/>
</dbReference>
<dbReference type="GO" id="GO:0004674">
    <property type="term" value="F:protein serine/threonine kinase activity"/>
    <property type="evidence" value="ECO:0000318"/>
    <property type="project" value="GO_Central"/>
</dbReference>
<dbReference type="GO" id="GO:0004521">
    <property type="term" value="F:RNA endonuclease activity"/>
    <property type="evidence" value="ECO:0000318"/>
    <property type="project" value="GO_Central"/>
</dbReference>
<dbReference type="GO" id="GO:0051082">
    <property type="term" value="F:unfolded protein binding"/>
    <property type="evidence" value="ECO:0000318"/>
    <property type="project" value="GO_Central"/>
</dbReference>
<dbReference type="GO" id="GO:0036498">
    <property type="term" value="P:IRE1-mediated unfolded protein response"/>
    <property type="evidence" value="ECO:0000318"/>
    <property type="project" value="GO_Central"/>
</dbReference>
<dbReference type="GO" id="GO:0006397">
    <property type="term" value="P:mRNA processing"/>
    <property type="evidence" value="ECO:0007669"/>
    <property type="project" value="InterPro"/>
</dbReference>
<dbReference type="CDD" id="cd10321">
    <property type="entry name" value="RNase_Ire1_like"/>
    <property type="match status" value="1"/>
</dbReference>
<dbReference type="FunFam" id="1.10.510.10:FF:001066">
    <property type="entry name" value="Probable serine/threonine-protein kinase irlE"/>
    <property type="match status" value="1"/>
</dbReference>
<dbReference type="FunFam" id="3.30.200.20:FF:000077">
    <property type="entry name" value="Putative Serine/threonine-protein kinase/endoribonuclease IRE1"/>
    <property type="match status" value="1"/>
</dbReference>
<dbReference type="Gene3D" id="1.20.1440.180">
    <property type="entry name" value="KEN domain"/>
    <property type="match status" value="1"/>
</dbReference>
<dbReference type="Gene3D" id="3.30.200.20">
    <property type="entry name" value="Phosphorylase Kinase, domain 1"/>
    <property type="match status" value="1"/>
</dbReference>
<dbReference type="Gene3D" id="1.10.510.10">
    <property type="entry name" value="Transferase(Phosphotransferase) domain 1"/>
    <property type="match status" value="1"/>
</dbReference>
<dbReference type="InterPro" id="IPR045133">
    <property type="entry name" value="IRE1/2-like"/>
</dbReference>
<dbReference type="InterPro" id="IPR010513">
    <property type="entry name" value="KEN_dom"/>
</dbReference>
<dbReference type="InterPro" id="IPR038357">
    <property type="entry name" value="KEN_sf"/>
</dbReference>
<dbReference type="InterPro" id="IPR011009">
    <property type="entry name" value="Kinase-like_dom_sf"/>
</dbReference>
<dbReference type="InterPro" id="IPR000719">
    <property type="entry name" value="Prot_kinase_dom"/>
</dbReference>
<dbReference type="PANTHER" id="PTHR13954">
    <property type="entry name" value="IRE1-RELATED"/>
    <property type="match status" value="1"/>
</dbReference>
<dbReference type="PANTHER" id="PTHR13954:SF12">
    <property type="entry name" value="SERINE_THREONINE-PROTEIN KINASE IRLA-RELATED"/>
    <property type="match status" value="1"/>
</dbReference>
<dbReference type="Pfam" id="PF00069">
    <property type="entry name" value="Pkinase"/>
    <property type="match status" value="1"/>
</dbReference>
<dbReference type="Pfam" id="PF06479">
    <property type="entry name" value="Ribonuc_2-5A"/>
    <property type="match status" value="1"/>
</dbReference>
<dbReference type="SUPFAM" id="SSF56112">
    <property type="entry name" value="Protein kinase-like (PK-like)"/>
    <property type="match status" value="1"/>
</dbReference>
<dbReference type="PROSITE" id="PS51392">
    <property type="entry name" value="KEN"/>
    <property type="match status" value="1"/>
</dbReference>
<dbReference type="PROSITE" id="PS50011">
    <property type="entry name" value="PROTEIN_KINASE_DOM"/>
    <property type="match status" value="1"/>
</dbReference>
<reference key="1">
    <citation type="journal article" date="2005" name="Nature">
        <title>The genome of the social amoeba Dictyostelium discoideum.</title>
        <authorList>
            <person name="Eichinger L."/>
            <person name="Pachebat J.A."/>
            <person name="Gloeckner G."/>
            <person name="Rajandream M.A."/>
            <person name="Sucgang R."/>
            <person name="Berriman M."/>
            <person name="Song J."/>
            <person name="Olsen R."/>
            <person name="Szafranski K."/>
            <person name="Xu Q."/>
            <person name="Tunggal B."/>
            <person name="Kummerfeld S."/>
            <person name="Madera M."/>
            <person name="Konfortov B.A."/>
            <person name="Rivero F."/>
            <person name="Bankier A.T."/>
            <person name="Lehmann R."/>
            <person name="Hamlin N."/>
            <person name="Davies R."/>
            <person name="Gaudet P."/>
            <person name="Fey P."/>
            <person name="Pilcher K."/>
            <person name="Chen G."/>
            <person name="Saunders D."/>
            <person name="Sodergren E.J."/>
            <person name="Davis P."/>
            <person name="Kerhornou A."/>
            <person name="Nie X."/>
            <person name="Hall N."/>
            <person name="Anjard C."/>
            <person name="Hemphill L."/>
            <person name="Bason N."/>
            <person name="Farbrother P."/>
            <person name="Desany B."/>
            <person name="Just E."/>
            <person name="Morio T."/>
            <person name="Rost R."/>
            <person name="Churcher C.M."/>
            <person name="Cooper J."/>
            <person name="Haydock S."/>
            <person name="van Driessche N."/>
            <person name="Cronin A."/>
            <person name="Goodhead I."/>
            <person name="Muzny D.M."/>
            <person name="Mourier T."/>
            <person name="Pain A."/>
            <person name="Lu M."/>
            <person name="Harper D."/>
            <person name="Lindsay R."/>
            <person name="Hauser H."/>
            <person name="James K.D."/>
            <person name="Quiles M."/>
            <person name="Madan Babu M."/>
            <person name="Saito T."/>
            <person name="Buchrieser C."/>
            <person name="Wardroper A."/>
            <person name="Felder M."/>
            <person name="Thangavelu M."/>
            <person name="Johnson D."/>
            <person name="Knights A."/>
            <person name="Loulseged H."/>
            <person name="Mungall K.L."/>
            <person name="Oliver K."/>
            <person name="Price C."/>
            <person name="Quail M.A."/>
            <person name="Urushihara H."/>
            <person name="Hernandez J."/>
            <person name="Rabbinowitsch E."/>
            <person name="Steffen D."/>
            <person name="Sanders M."/>
            <person name="Ma J."/>
            <person name="Kohara Y."/>
            <person name="Sharp S."/>
            <person name="Simmonds M.N."/>
            <person name="Spiegler S."/>
            <person name="Tivey A."/>
            <person name="Sugano S."/>
            <person name="White B."/>
            <person name="Walker D."/>
            <person name="Woodward J.R."/>
            <person name="Winckler T."/>
            <person name="Tanaka Y."/>
            <person name="Shaulsky G."/>
            <person name="Schleicher M."/>
            <person name="Weinstock G.M."/>
            <person name="Rosenthal A."/>
            <person name="Cox E.C."/>
            <person name="Chisholm R.L."/>
            <person name="Gibbs R.A."/>
            <person name="Loomis W.F."/>
            <person name="Platzer M."/>
            <person name="Kay R.R."/>
            <person name="Williams J.G."/>
            <person name="Dear P.H."/>
            <person name="Noegel A.A."/>
            <person name="Barrell B.G."/>
            <person name="Kuspa A."/>
        </authorList>
    </citation>
    <scope>NUCLEOTIDE SEQUENCE [LARGE SCALE GENOMIC DNA]</scope>
    <source>
        <strain>AX4</strain>
    </source>
</reference>
<proteinExistence type="inferred from homology"/>
<name>IRLE_DICDI</name>
<comment type="catalytic activity">
    <reaction>
        <text>L-seryl-[protein] + ATP = O-phospho-L-seryl-[protein] + ADP + H(+)</text>
        <dbReference type="Rhea" id="RHEA:17989"/>
        <dbReference type="Rhea" id="RHEA-COMP:9863"/>
        <dbReference type="Rhea" id="RHEA-COMP:11604"/>
        <dbReference type="ChEBI" id="CHEBI:15378"/>
        <dbReference type="ChEBI" id="CHEBI:29999"/>
        <dbReference type="ChEBI" id="CHEBI:30616"/>
        <dbReference type="ChEBI" id="CHEBI:83421"/>
        <dbReference type="ChEBI" id="CHEBI:456216"/>
        <dbReference type="EC" id="2.7.11.1"/>
    </reaction>
</comment>
<comment type="catalytic activity">
    <reaction>
        <text>L-threonyl-[protein] + ATP = O-phospho-L-threonyl-[protein] + ADP + H(+)</text>
        <dbReference type="Rhea" id="RHEA:46608"/>
        <dbReference type="Rhea" id="RHEA-COMP:11060"/>
        <dbReference type="Rhea" id="RHEA-COMP:11605"/>
        <dbReference type="ChEBI" id="CHEBI:15378"/>
        <dbReference type="ChEBI" id="CHEBI:30013"/>
        <dbReference type="ChEBI" id="CHEBI:30616"/>
        <dbReference type="ChEBI" id="CHEBI:61977"/>
        <dbReference type="ChEBI" id="CHEBI:456216"/>
        <dbReference type="EC" id="2.7.11.1"/>
    </reaction>
</comment>
<comment type="subcellular location">
    <subcellularLocation>
        <location evidence="5">Membrane</location>
        <topology evidence="5">Single-pass membrane protein</topology>
    </subcellularLocation>
</comment>
<comment type="similarity">
    <text evidence="2">Belongs to the protein kinase superfamily. Ser/Thr protein kinase family.</text>
</comment>
<accession>Q54IE8</accession>
<sequence>MGKKKIDINTREDLFLSYYKEIEKNKFDLLKICSDKNFSKSNFLKAVHCLFSLSYFCKIKDENEEEEGKEEEINDYKVKKSTTGNYYRNSEGKLFKKSNEKDQIDDVSIFYKRLPTIQDFKDTYDKYENCLNSVYYIIRKIKLLHLEYFWEILASCYGTISFIKFFNIFSNEIFSPSENGDSVFIMVGKFFRRKVRAETHYDLIFLKIILANASIPMILKLGVKDIGRFTEKEDIIVSYYRNFSIIHSLRFDNVKEFALVYKTLKNNYPSKKKKKITLFEENGKINVKTSKKDLMLFEFVCKFDCVKIFKKYFLPKPQIINNNDNNEMLECISSGSYSGFDEKSKRKIRIFFSICCRQISPKILKCIVDYVKDDIGFLDLQNRQDIYIGDSAPEKVLFLNCFFGNHKEQRVIDFFNLLTSKSIIICNTIKEKPELYDYRYITLSTVDSTFYFSDSHKGADFGVYTDEINVIINNDDIDYDYIGDDDNDEEIEETKDYGSSSSDIDDFYNVFEPKASMIPNILDSCSLEILKAYIQNITGNGLFKISPSLFLAHDVTRLVRNPKPKTETVVKILEFINTISRLSELSTNGVPFTFLTNRFEIVTSIIMSLHDERSISNSVEPVQWLRALAPFVSNDEMKLIIYKVRTLYNYEPHSNGEIKYTELVRLFDVQYLLTKGKFSLSQFNGFETSIFLNPKLLDGTINSNILNSMIIKDKEKLDLKELFFKEKPLSEAELKEKFEIATKNEKELLDQLKKENDAEKLKKKNKLKKQKNQQQQQQAKQQAQQQKQQHQQNIQQNYENQHIEDQRKFNQQTKGRPISPSSIQNQNLNPTLLQNQNQTSNPTPNLESTKKATPTTTTTTTTNSNTSAIINEIKNQDLNQQQNITENINEIYDVSIGKFKFNKKESNILGRGSNGTLVFKGIWNNRIPVAIKQMQKMFNPLISKEIEILIGLTNKNLNLVGYIDQEEDENCVYLGLTLCDGSLQSLYDQSKLNEFINQNNNQNNNNNNNRVLDLIIGMINGVIFLHDQNIVHNDLNPRNILVKDNRLIISDLGLSKMNVSSTYNFSTNAIPTGQDGYHPVEVLLEKRKTKSVDVFSLGCLIYFIMTNGAHPFGDKFSRLRYITKSKYNLSQLSNLNLVATHLIELMISYDESKRPTLSSVLKHPLFWDSLKKIKFLESSLRLLGDHDFKKFNINKILISCNSNSSSSNSICNSSNSSSSSSSSISSSSCKISSSSCYCVPLPWNQSLDYQLVDSLSNQIEKKVASYKFDQLHDLIRFIRNTLQHYNQIYRDLKQILPNSDILESLKSQQSALNYFESKFPTLIIFLFNHFSAIPEIKNSIHFSNDTCSIF</sequence>
<protein>
    <recommendedName>
        <fullName>Probable serine/threonine-protein kinase irlE</fullName>
        <ecNumber>2.7.11.1</ecNumber>
    </recommendedName>
    <alternativeName>
        <fullName>Inositol-requiring protein-like protein kinase E</fullName>
    </alternativeName>
</protein>
<feature type="chain" id="PRO_0000362020" description="Probable serine/threonine-protein kinase irlE">
    <location>
        <begin position="1"/>
        <end position="1350"/>
    </location>
</feature>
<feature type="transmembrane region" description="Helical" evidence="1">
    <location>
        <begin position="149"/>
        <end position="169"/>
    </location>
</feature>
<feature type="domain" description="Protein kinase" evidence="2">
    <location>
        <begin position="903"/>
        <end position="1166"/>
    </location>
</feature>
<feature type="domain" description="KEN" evidence="3">
    <location>
        <begin position="1169"/>
        <end position="1346"/>
    </location>
</feature>
<feature type="region of interest" description="Disordered" evidence="4">
    <location>
        <begin position="761"/>
        <end position="795"/>
    </location>
</feature>
<feature type="region of interest" description="Disordered" evidence="4">
    <location>
        <begin position="807"/>
        <end position="864"/>
    </location>
</feature>
<feature type="coiled-coil region" evidence="1">
    <location>
        <begin position="731"/>
        <end position="802"/>
    </location>
</feature>
<feature type="compositionally biased region" description="Basic residues" evidence="4">
    <location>
        <begin position="761"/>
        <end position="771"/>
    </location>
</feature>
<feature type="compositionally biased region" description="Low complexity" evidence="4">
    <location>
        <begin position="772"/>
        <end position="795"/>
    </location>
</feature>
<feature type="compositionally biased region" description="Polar residues" evidence="4">
    <location>
        <begin position="809"/>
        <end position="823"/>
    </location>
</feature>
<feature type="compositionally biased region" description="Low complexity" evidence="4">
    <location>
        <begin position="824"/>
        <end position="864"/>
    </location>
</feature>
<feature type="active site" description="Proton acceptor" evidence="2">
    <location>
        <position position="1034"/>
    </location>
</feature>
<feature type="binding site" evidence="2">
    <location>
        <begin position="909"/>
        <end position="917"/>
    </location>
    <ligand>
        <name>ATP</name>
        <dbReference type="ChEBI" id="CHEBI:30616"/>
    </ligand>
</feature>
<feature type="binding site" evidence="2">
    <location>
        <position position="932"/>
    </location>
    <ligand>
        <name>ATP</name>
        <dbReference type="ChEBI" id="CHEBI:30616"/>
    </ligand>
</feature>
<feature type="glycosylation site" description="N-linked (GlcNAc...) asparagine" evidence="1">
    <location>
        <position position="37"/>
    </location>
</feature>
<organism>
    <name type="scientific">Dictyostelium discoideum</name>
    <name type="common">Social amoeba</name>
    <dbReference type="NCBI Taxonomy" id="44689"/>
    <lineage>
        <taxon>Eukaryota</taxon>
        <taxon>Amoebozoa</taxon>
        <taxon>Evosea</taxon>
        <taxon>Eumycetozoa</taxon>
        <taxon>Dictyostelia</taxon>
        <taxon>Dictyosteliales</taxon>
        <taxon>Dictyosteliaceae</taxon>
        <taxon>Dictyostelium</taxon>
    </lineage>
</organism>
<gene>
    <name type="primary">irlE</name>
    <name type="ORF">DDB_G0288803</name>
</gene>
<keyword id="KW-0067">ATP-binding</keyword>
<keyword id="KW-0175">Coiled coil</keyword>
<keyword id="KW-0325">Glycoprotein</keyword>
<keyword id="KW-0418">Kinase</keyword>
<keyword id="KW-0472">Membrane</keyword>
<keyword id="KW-0547">Nucleotide-binding</keyword>
<keyword id="KW-1185">Reference proteome</keyword>
<keyword id="KW-0723">Serine/threonine-protein kinase</keyword>
<keyword id="KW-0808">Transferase</keyword>
<keyword id="KW-0812">Transmembrane</keyword>
<keyword id="KW-1133">Transmembrane helix</keyword>